<protein>
    <recommendedName>
        <fullName>Kunitz-type serine protease inhibitor 6</fullName>
        <shortName>BmTI-6</shortName>
    </recommendedName>
</protein>
<organism>
    <name type="scientific">Rhipicephalus microplus</name>
    <name type="common">Cattle tick</name>
    <name type="synonym">Boophilus microplus</name>
    <dbReference type="NCBI Taxonomy" id="6941"/>
    <lineage>
        <taxon>Eukaryota</taxon>
        <taxon>Metazoa</taxon>
        <taxon>Ecdysozoa</taxon>
        <taxon>Arthropoda</taxon>
        <taxon>Chelicerata</taxon>
        <taxon>Arachnida</taxon>
        <taxon>Acari</taxon>
        <taxon>Parasitiformes</taxon>
        <taxon>Ixodida</taxon>
        <taxon>Ixodoidea</taxon>
        <taxon>Ixodidae</taxon>
        <taxon>Rhipicephalinae</taxon>
        <taxon>Rhipicephalus</taxon>
        <taxon>Boophilus</taxon>
    </lineage>
</organism>
<keyword id="KW-0903">Direct protein sequencing</keyword>
<keyword id="KW-1015">Disulfide bond</keyword>
<keyword id="KW-0325">Glycoprotein</keyword>
<keyword id="KW-0646">Protease inhibitor</keyword>
<keyword id="KW-0677">Repeat</keyword>
<keyword id="KW-0964">Secreted</keyword>
<keyword id="KW-0722">Serine protease inhibitor</keyword>
<comment type="function">
    <text evidence="4 5">Inhibits trypsin and plasmin. Does not inhibit human plasma kallikrein, chymotrypsin, human neutrophil elastase, factor Xa, factor XIIa or thrombin.</text>
</comment>
<comment type="subcellular location">
    <subcellularLocation>
        <location>Secreted</location>
    </subcellularLocation>
</comment>
<accession>P83606</accession>
<sequence length="291" mass="33847">VDFETYCKPTYDSGPCKGYFPRWWFNVKTGQCEEFIYGGCQGNKNNHVTRKECETRCLRKQLSRLHFSPPVDQYPYGDTERSNEEVPEYPPVHLNDSLEVSAVMNQRPLRNYTKQHKPNVTSDFSAISLTSGVDFETYCKPTHDRGPCKAYIPRWWFNVKTGQCEQFIYGGCQGNKNNYETKSICETNCLRRQLSELGVSADVHYRKHWNETKYSPNVTVEYPAVHFNVTLNPVCNEPKYPELCKGYFPRYYYNSRSKTCKKFIYGGCQSNGNNFLTLEECENTCLVDLQV</sequence>
<proteinExistence type="evidence at protein level"/>
<name>BMTI6_RHIMP</name>
<dbReference type="EMBL" id="CK186726">
    <property type="status" value="NOT_ANNOTATED_CDS"/>
    <property type="molecule type" value="mRNA"/>
</dbReference>
<dbReference type="SMR" id="P83606"/>
<dbReference type="VEuPathDB" id="VectorBase:LOC119167312"/>
<dbReference type="OrthoDB" id="6501218at2759"/>
<dbReference type="GO" id="GO:0005615">
    <property type="term" value="C:extracellular space"/>
    <property type="evidence" value="ECO:0007669"/>
    <property type="project" value="TreeGrafter"/>
</dbReference>
<dbReference type="GO" id="GO:0004867">
    <property type="term" value="F:serine-type endopeptidase inhibitor activity"/>
    <property type="evidence" value="ECO:0007669"/>
    <property type="project" value="UniProtKB-KW"/>
</dbReference>
<dbReference type="GO" id="GO:0044562">
    <property type="term" value="P:envenomation resulting in negative regulation of voltage-gated potassium channel activity in another organism"/>
    <property type="evidence" value="ECO:0007669"/>
    <property type="project" value="UniProtKB-ARBA"/>
</dbReference>
<dbReference type="CDD" id="cd00109">
    <property type="entry name" value="Kunitz-type"/>
    <property type="match status" value="1"/>
</dbReference>
<dbReference type="CDD" id="cd22604">
    <property type="entry name" value="Kunitz_BmTI-like"/>
    <property type="match status" value="2"/>
</dbReference>
<dbReference type="FunFam" id="4.10.410.10:FF:000004">
    <property type="entry name" value="Tissue factor pathway inhibitor"/>
    <property type="match status" value="2"/>
</dbReference>
<dbReference type="Gene3D" id="4.10.410.10">
    <property type="entry name" value="Pancreatic trypsin inhibitor Kunitz domain"/>
    <property type="match status" value="3"/>
</dbReference>
<dbReference type="InterPro" id="IPR002223">
    <property type="entry name" value="Kunitz_BPTI"/>
</dbReference>
<dbReference type="InterPro" id="IPR036880">
    <property type="entry name" value="Kunitz_BPTI_sf"/>
</dbReference>
<dbReference type="InterPro" id="IPR020901">
    <property type="entry name" value="Prtase_inh_Kunz-CS"/>
</dbReference>
<dbReference type="InterPro" id="IPR050098">
    <property type="entry name" value="TFPI/VKTCI-like"/>
</dbReference>
<dbReference type="PANTHER" id="PTHR10083">
    <property type="entry name" value="KUNITZ-TYPE PROTEASE INHIBITOR-RELATED"/>
    <property type="match status" value="1"/>
</dbReference>
<dbReference type="PANTHER" id="PTHR10083:SF328">
    <property type="entry name" value="TISSUE FACTOR PATHWAY INHIBITOR"/>
    <property type="match status" value="1"/>
</dbReference>
<dbReference type="Pfam" id="PF00014">
    <property type="entry name" value="Kunitz_BPTI"/>
    <property type="match status" value="3"/>
</dbReference>
<dbReference type="PRINTS" id="PR00759">
    <property type="entry name" value="BASICPTASE"/>
</dbReference>
<dbReference type="SMART" id="SM00131">
    <property type="entry name" value="KU"/>
    <property type="match status" value="3"/>
</dbReference>
<dbReference type="SUPFAM" id="SSF57362">
    <property type="entry name" value="BPTI-like"/>
    <property type="match status" value="3"/>
</dbReference>
<dbReference type="PROSITE" id="PS00280">
    <property type="entry name" value="BPTI_KUNITZ_1"/>
    <property type="match status" value="2"/>
</dbReference>
<dbReference type="PROSITE" id="PS50279">
    <property type="entry name" value="BPTI_KUNITZ_2"/>
    <property type="match status" value="3"/>
</dbReference>
<reference key="1">
    <citation type="journal article" date="2008" name="Vet. Parasitol.">
        <title>rBmTI-6, a Kunitz-BPTI domain protease inhibitor from the tick Boophilus microplus, its cloning, expression and biochemical characterization.</title>
        <authorList>
            <person name="Sasaki S.D."/>
            <person name="Tanaka A.S."/>
        </authorList>
    </citation>
    <scope>NUCLEOTIDE SEQUENCE [MRNA]</scope>
    <scope>PROTEIN SEQUENCE OF N-TERMINUS</scope>
    <scope>FUNCTION</scope>
</reference>
<reference key="2">
    <citation type="submission" date="2004-07" db="EMBL/GenBank/DDBJ databases">
        <title>An index of genes transcribed in the tick Boophilus microplus.</title>
        <authorList>
            <person name="Nene V."/>
            <person name="Quackenbush J."/>
            <person name="George J."/>
            <person name="Guerrero F."/>
        </authorList>
    </citation>
    <scope>NUCLEOTIDE SEQUENCE [MRNA]</scope>
</reference>
<reference key="3">
    <citation type="submission" date="2003-06" db="UniProtKB">
        <title>Molecular studies of serine protease inhibitors from cattle tick Boophilus microplus (larvae).</title>
        <authorList>
            <person name="Sasaki S.D."/>
            <person name="Hirata I.Y."/>
            <person name="Tanaka A.S."/>
        </authorList>
    </citation>
    <scope>PROTEIN SEQUENCE OF 1-35</scope>
    <scope>FUNCTION</scope>
    <source>
        <tissue>Larva</tissue>
    </source>
</reference>
<evidence type="ECO:0000250" key="1"/>
<evidence type="ECO:0000255" key="2"/>
<evidence type="ECO:0000255" key="3">
    <source>
        <dbReference type="PROSITE-ProRule" id="PRU00031"/>
    </source>
</evidence>
<evidence type="ECO:0000269" key="4">
    <source>
    </source>
</evidence>
<evidence type="ECO:0000269" key="5">
    <source ref="3"/>
</evidence>
<evidence type="ECO:0000305" key="6"/>
<feature type="chain" id="PRO_0000155454" description="Kunitz-type serine protease inhibitor 6">
    <location>
        <begin position="1"/>
        <end position="291" status="greater than"/>
    </location>
</feature>
<feature type="domain" description="BPTI/Kunitz inhibitor 1" evidence="3">
    <location>
        <begin position="7"/>
        <end position="57"/>
    </location>
</feature>
<feature type="domain" description="BPTI/Kunitz inhibitor 2" evidence="3">
    <location>
        <begin position="139"/>
        <end position="189"/>
    </location>
</feature>
<feature type="domain" description="BPTI/Kunitz inhibitor 3" evidence="3">
    <location>
        <begin position="235"/>
        <end position="285"/>
    </location>
</feature>
<feature type="site" description="Reactive bond" evidence="1">
    <location>
        <begin position="17"/>
        <end position="18"/>
    </location>
</feature>
<feature type="site" description="Reactive bond" evidence="1">
    <location>
        <begin position="149"/>
        <end position="150"/>
    </location>
</feature>
<feature type="site" description="Reactive bond" evidence="1">
    <location>
        <begin position="245"/>
        <end position="246"/>
    </location>
</feature>
<feature type="glycosylation site" description="N-linked (GlcNAc...) asparagine" evidence="2">
    <location>
        <position position="95"/>
    </location>
</feature>
<feature type="glycosylation site" description="N-linked (GlcNAc...) asparagine" evidence="2">
    <location>
        <position position="111"/>
    </location>
</feature>
<feature type="glycosylation site" description="N-linked (GlcNAc...) asparagine" evidence="2">
    <location>
        <position position="119"/>
    </location>
</feature>
<feature type="glycosylation site" description="N-linked (GlcNAc...) asparagine" evidence="2">
    <location>
        <position position="210"/>
    </location>
</feature>
<feature type="glycosylation site" description="N-linked (GlcNAc...) asparagine" evidence="2">
    <location>
        <position position="217"/>
    </location>
</feature>
<feature type="glycosylation site" description="N-linked (GlcNAc...) asparagine" evidence="2">
    <location>
        <position position="228"/>
    </location>
</feature>
<feature type="disulfide bond" evidence="3">
    <location>
        <begin position="7"/>
        <end position="57"/>
    </location>
</feature>
<feature type="disulfide bond" evidence="3">
    <location>
        <begin position="16"/>
        <end position="40"/>
    </location>
</feature>
<feature type="disulfide bond" evidence="3">
    <location>
        <begin position="32"/>
        <end position="53"/>
    </location>
</feature>
<feature type="disulfide bond" evidence="3">
    <location>
        <begin position="139"/>
        <end position="189"/>
    </location>
</feature>
<feature type="disulfide bond" evidence="3">
    <location>
        <begin position="148"/>
        <end position="172"/>
    </location>
</feature>
<feature type="disulfide bond" evidence="3">
    <location>
        <begin position="164"/>
        <end position="185"/>
    </location>
</feature>
<feature type="disulfide bond" evidence="3">
    <location>
        <begin position="235"/>
        <end position="285"/>
    </location>
</feature>
<feature type="disulfide bond" evidence="3">
    <location>
        <begin position="244"/>
        <end position="268"/>
    </location>
</feature>
<feature type="disulfide bond" evidence="3">
    <location>
        <begin position="260"/>
        <end position="281"/>
    </location>
</feature>
<feature type="sequence conflict" description="In Ref. 3; AA sequence." evidence="6" ref="3">
    <original>F</original>
    <variation>K</variation>
    <location>
        <position position="20"/>
    </location>
</feature>
<feature type="sequence conflict" description="In Ref. 3; AA sequence." evidence="6" ref="3">
    <original>F</original>
    <variation>K</variation>
    <location>
        <position position="25"/>
    </location>
</feature>
<feature type="sequence conflict" description="In Ref. 3; AA sequence." evidence="6" ref="3">
    <original>F</original>
    <variation>K</variation>
    <location>
        <position position="35"/>
    </location>
</feature>
<feature type="non-terminal residue">
    <location>
        <position position="291"/>
    </location>
</feature>